<evidence type="ECO:0000255" key="1">
    <source>
        <dbReference type="HAMAP-Rule" id="MF_00741"/>
    </source>
</evidence>
<dbReference type="EC" id="6.3.3.1" evidence="1"/>
<dbReference type="EMBL" id="CP000605">
    <property type="protein sequence ID" value="ACD98325.1"/>
    <property type="molecule type" value="Genomic_DNA"/>
</dbReference>
<dbReference type="RefSeq" id="WP_010081095.1">
    <property type="nucleotide sequence ID" value="NZ_AABM02000006.1"/>
</dbReference>
<dbReference type="SMR" id="B3DT56"/>
<dbReference type="GeneID" id="69577729"/>
<dbReference type="KEGG" id="blj:BLD_0879"/>
<dbReference type="HOGENOM" id="CLU_047116_0_0_11"/>
<dbReference type="UniPathway" id="UPA00074">
    <property type="reaction ID" value="UER00129"/>
</dbReference>
<dbReference type="Proteomes" id="UP000002419">
    <property type="component" value="Chromosome"/>
</dbReference>
<dbReference type="GO" id="GO:0005829">
    <property type="term" value="C:cytosol"/>
    <property type="evidence" value="ECO:0007669"/>
    <property type="project" value="TreeGrafter"/>
</dbReference>
<dbReference type="GO" id="GO:0005524">
    <property type="term" value="F:ATP binding"/>
    <property type="evidence" value="ECO:0007669"/>
    <property type="project" value="UniProtKB-KW"/>
</dbReference>
<dbReference type="GO" id="GO:0004637">
    <property type="term" value="F:phosphoribosylamine-glycine ligase activity"/>
    <property type="evidence" value="ECO:0007669"/>
    <property type="project" value="TreeGrafter"/>
</dbReference>
<dbReference type="GO" id="GO:0004641">
    <property type="term" value="F:phosphoribosylformylglycinamidine cyclo-ligase activity"/>
    <property type="evidence" value="ECO:0007669"/>
    <property type="project" value="UniProtKB-UniRule"/>
</dbReference>
<dbReference type="GO" id="GO:0006189">
    <property type="term" value="P:'de novo' IMP biosynthetic process"/>
    <property type="evidence" value="ECO:0007669"/>
    <property type="project" value="UniProtKB-UniRule"/>
</dbReference>
<dbReference type="GO" id="GO:0046084">
    <property type="term" value="P:adenine biosynthetic process"/>
    <property type="evidence" value="ECO:0007669"/>
    <property type="project" value="TreeGrafter"/>
</dbReference>
<dbReference type="CDD" id="cd02196">
    <property type="entry name" value="PurM"/>
    <property type="match status" value="1"/>
</dbReference>
<dbReference type="FunFam" id="3.30.1330.10:FF:000001">
    <property type="entry name" value="Phosphoribosylformylglycinamidine cyclo-ligase"/>
    <property type="match status" value="1"/>
</dbReference>
<dbReference type="FunFam" id="3.90.650.10:FF:000001">
    <property type="entry name" value="Phosphoribosylformylglycinamidine cyclo-ligase"/>
    <property type="match status" value="1"/>
</dbReference>
<dbReference type="Gene3D" id="3.90.650.10">
    <property type="entry name" value="PurM-like C-terminal domain"/>
    <property type="match status" value="1"/>
</dbReference>
<dbReference type="Gene3D" id="3.30.1330.10">
    <property type="entry name" value="PurM-like, N-terminal domain"/>
    <property type="match status" value="1"/>
</dbReference>
<dbReference type="HAMAP" id="MF_00741">
    <property type="entry name" value="AIRS"/>
    <property type="match status" value="1"/>
</dbReference>
<dbReference type="InterPro" id="IPR010918">
    <property type="entry name" value="PurM-like_C_dom"/>
</dbReference>
<dbReference type="InterPro" id="IPR036676">
    <property type="entry name" value="PurM-like_C_sf"/>
</dbReference>
<dbReference type="InterPro" id="IPR016188">
    <property type="entry name" value="PurM-like_N"/>
</dbReference>
<dbReference type="InterPro" id="IPR036921">
    <property type="entry name" value="PurM-like_N_sf"/>
</dbReference>
<dbReference type="InterPro" id="IPR004733">
    <property type="entry name" value="PurM_cligase"/>
</dbReference>
<dbReference type="NCBIfam" id="TIGR00878">
    <property type="entry name" value="purM"/>
    <property type="match status" value="1"/>
</dbReference>
<dbReference type="PANTHER" id="PTHR10520:SF12">
    <property type="entry name" value="TRIFUNCTIONAL PURINE BIOSYNTHETIC PROTEIN ADENOSINE-3"/>
    <property type="match status" value="1"/>
</dbReference>
<dbReference type="PANTHER" id="PTHR10520">
    <property type="entry name" value="TRIFUNCTIONAL PURINE BIOSYNTHETIC PROTEIN ADENOSINE-3-RELATED"/>
    <property type="match status" value="1"/>
</dbReference>
<dbReference type="Pfam" id="PF00586">
    <property type="entry name" value="AIRS"/>
    <property type="match status" value="1"/>
</dbReference>
<dbReference type="Pfam" id="PF02769">
    <property type="entry name" value="AIRS_C"/>
    <property type="match status" value="1"/>
</dbReference>
<dbReference type="SUPFAM" id="SSF56042">
    <property type="entry name" value="PurM C-terminal domain-like"/>
    <property type="match status" value="1"/>
</dbReference>
<dbReference type="SUPFAM" id="SSF55326">
    <property type="entry name" value="PurM N-terminal domain-like"/>
    <property type="match status" value="1"/>
</dbReference>
<sequence>MPKAYENAGVSVEAGYEVVKRIKSHVARTNRPGVVGGIGGFGGLFDLASLGYKEPVLISGTDGVGTKLMVAKLANKHDTIGIDCVAMCVNDIAAQGAEPLFFLDYIACGKNDPALLEQVVAGVADGCVQAGSALVGGETAEMPGMYDEDEYDLAGFSVGVAEKSAIVDGSTIAEGDVLIGLPSTGVHSNGFSLVRKALFEQAGYTVDTELDELGGEKLGDVLLTPTKIYVKALSPLFKAGVVKGVAHITGGGFIENIPRMIPDGLAAEIELGTWPVLPIFDVLEKAGNIDHKEMYNIFNMGIGMVLAIDPARKDEALKLLADNNEPAYVLGSITADTTGTQIVLK</sequence>
<protein>
    <recommendedName>
        <fullName evidence="1">Phosphoribosylformylglycinamidine cyclo-ligase</fullName>
        <ecNumber evidence="1">6.3.3.1</ecNumber>
    </recommendedName>
    <alternativeName>
        <fullName evidence="1">AIR synthase</fullName>
    </alternativeName>
    <alternativeName>
        <fullName evidence="1">AIRS</fullName>
    </alternativeName>
    <alternativeName>
        <fullName evidence="1">Phosphoribosyl-aminoimidazole synthetase</fullName>
    </alternativeName>
</protein>
<feature type="chain" id="PRO_1000192998" description="Phosphoribosylformylglycinamidine cyclo-ligase">
    <location>
        <begin position="1"/>
        <end position="345"/>
    </location>
</feature>
<gene>
    <name evidence="1" type="primary">purM</name>
    <name type="ordered locus">BLD_0879</name>
</gene>
<keyword id="KW-0067">ATP-binding</keyword>
<keyword id="KW-0963">Cytoplasm</keyword>
<keyword id="KW-0436">Ligase</keyword>
<keyword id="KW-0547">Nucleotide-binding</keyword>
<keyword id="KW-0658">Purine biosynthesis</keyword>
<proteinExistence type="inferred from homology"/>
<comment type="catalytic activity">
    <reaction evidence="1">
        <text>2-formamido-N(1)-(5-O-phospho-beta-D-ribosyl)acetamidine + ATP = 5-amino-1-(5-phospho-beta-D-ribosyl)imidazole + ADP + phosphate + H(+)</text>
        <dbReference type="Rhea" id="RHEA:23032"/>
        <dbReference type="ChEBI" id="CHEBI:15378"/>
        <dbReference type="ChEBI" id="CHEBI:30616"/>
        <dbReference type="ChEBI" id="CHEBI:43474"/>
        <dbReference type="ChEBI" id="CHEBI:137981"/>
        <dbReference type="ChEBI" id="CHEBI:147287"/>
        <dbReference type="ChEBI" id="CHEBI:456216"/>
        <dbReference type="EC" id="6.3.3.1"/>
    </reaction>
</comment>
<comment type="pathway">
    <text evidence="1">Purine metabolism; IMP biosynthesis via de novo pathway; 5-amino-1-(5-phospho-D-ribosyl)imidazole from N(2)-formyl-N(1)-(5-phospho-D-ribosyl)glycinamide: step 2/2.</text>
</comment>
<comment type="subcellular location">
    <subcellularLocation>
        <location evidence="1">Cytoplasm</location>
    </subcellularLocation>
</comment>
<comment type="similarity">
    <text evidence="1">Belongs to the AIR synthase family.</text>
</comment>
<reference key="1">
    <citation type="journal article" date="2008" name="BMC Genomics">
        <title>Comparative genomic analysis of the gut bacterium Bifidobacterium longum reveals loci susceptible to deletion during pure culture growth.</title>
        <authorList>
            <person name="Lee J.H."/>
            <person name="Karamychev V.N."/>
            <person name="Kozyavkin S.A."/>
            <person name="Mills D."/>
            <person name="Pavlov A.R."/>
            <person name="Pavlova N.V."/>
            <person name="Polouchine N.N."/>
            <person name="Richardson P.M."/>
            <person name="Shakhova V.V."/>
            <person name="Slesarev A.I."/>
            <person name="Weimer B."/>
            <person name="O'Sullivan D.J."/>
        </authorList>
    </citation>
    <scope>NUCLEOTIDE SEQUENCE [LARGE SCALE GENOMIC DNA]</scope>
    <source>
        <strain>DJO10A</strain>
    </source>
</reference>
<name>PUR5_BIFLD</name>
<organism>
    <name type="scientific">Bifidobacterium longum (strain DJO10A)</name>
    <dbReference type="NCBI Taxonomy" id="205913"/>
    <lineage>
        <taxon>Bacteria</taxon>
        <taxon>Bacillati</taxon>
        <taxon>Actinomycetota</taxon>
        <taxon>Actinomycetes</taxon>
        <taxon>Bifidobacteriales</taxon>
        <taxon>Bifidobacteriaceae</taxon>
        <taxon>Bifidobacterium</taxon>
    </lineage>
</organism>
<accession>B3DT56</accession>